<accession>G2K044</accession>
<accession>Q9S5A2</accession>
<comment type="function">
    <text evidence="1">Methylates ribosomal protein L11.</text>
</comment>
<comment type="catalytic activity">
    <reaction evidence="1">
        <text>L-lysyl-[protein] + 3 S-adenosyl-L-methionine = N(6),N(6),N(6)-trimethyl-L-lysyl-[protein] + 3 S-adenosyl-L-homocysteine + 3 H(+)</text>
        <dbReference type="Rhea" id="RHEA:54192"/>
        <dbReference type="Rhea" id="RHEA-COMP:9752"/>
        <dbReference type="Rhea" id="RHEA-COMP:13826"/>
        <dbReference type="ChEBI" id="CHEBI:15378"/>
        <dbReference type="ChEBI" id="CHEBI:29969"/>
        <dbReference type="ChEBI" id="CHEBI:57856"/>
        <dbReference type="ChEBI" id="CHEBI:59789"/>
        <dbReference type="ChEBI" id="CHEBI:61961"/>
    </reaction>
</comment>
<comment type="subcellular location">
    <subcellularLocation>
        <location evidence="1">Cytoplasm</location>
    </subcellularLocation>
</comment>
<comment type="similarity">
    <text evidence="1">Belongs to the methyltransferase superfamily. PrmA family.</text>
</comment>
<keyword id="KW-0963">Cytoplasm</keyword>
<keyword id="KW-0489">Methyltransferase</keyword>
<keyword id="KW-0949">S-adenosyl-L-methionine</keyword>
<keyword id="KW-0808">Transferase</keyword>
<reference key="1">
    <citation type="journal article" date="2000" name="Cell Stress Chaperones">
        <title>Cloning, sequencing, and transcriptional analysis of the dnaK heat shock operon of Listeria monocytogenes.</title>
        <authorList>
            <person name="Hanawa T."/>
            <person name="Kai M."/>
            <person name="Kamiya S."/>
            <person name="Yamamoto T."/>
        </authorList>
    </citation>
    <scope>NUCLEOTIDE SEQUENCE [GENOMIC DNA]</scope>
    <source>
        <strain>10403S</strain>
    </source>
</reference>
<reference key="2">
    <citation type="submission" date="2010-04" db="EMBL/GenBank/DDBJ databases">
        <title>The genome sequence of Listeria monocytogenes strain 10403S.</title>
        <authorList>
            <consortium name="The Broad Institute Genome Sequencing Platform"/>
            <consortium name="The Broad Institute Genome Sequencing Center for Infectious Disease"/>
            <person name="Borowsky M."/>
            <person name="Borodovsky M."/>
            <person name="Young S.K."/>
            <person name="Zeng Q."/>
            <person name="Koehrsen M."/>
            <person name="Fitzgerald M."/>
            <person name="Wiedmann M."/>
            <person name="Swaminathan B."/>
            <person name="Lauer P."/>
            <person name="Portnoy D."/>
            <person name="Cossart P."/>
            <person name="Buchrieser C."/>
            <person name="Higgins D."/>
            <person name="Abouelleil A."/>
            <person name="Alvarado L."/>
            <person name="Arachchi H.M."/>
            <person name="Berlin A."/>
            <person name="Borenstein D."/>
            <person name="Brown A."/>
            <person name="Chapman S.B."/>
            <person name="Chen Z."/>
            <person name="Dunbar C.D."/>
            <person name="Engels R."/>
            <person name="Freedman E."/>
            <person name="Gearin G."/>
            <person name="Gellesch M."/>
            <person name="Goldberg J."/>
            <person name="Griggs A."/>
            <person name="Gujja S."/>
            <person name="Heilman E."/>
            <person name="Heiman D."/>
            <person name="Howarth C."/>
            <person name="Jen D."/>
            <person name="Larson L."/>
            <person name="Lui A."/>
            <person name="MacDonald J."/>
            <person name="Mehta T."/>
            <person name="Montmayeur A."/>
            <person name="Neiman D."/>
            <person name="Park D."/>
            <person name="Pearson M."/>
            <person name="Priest M."/>
            <person name="Richards J."/>
            <person name="Roberts A."/>
            <person name="Saif S."/>
            <person name="Shea T."/>
            <person name="Shenoy N."/>
            <person name="Sisk P."/>
            <person name="Stolte C."/>
            <person name="Sykes S."/>
            <person name="Walk T."/>
            <person name="White J."/>
            <person name="Yandava C."/>
            <person name="Haas B."/>
            <person name="Nusbaum C."/>
            <person name="Birren B."/>
        </authorList>
    </citation>
    <scope>NUCLEOTIDE SEQUENCE [LARGE SCALE GENOMIC DNA]</scope>
    <source>
        <strain>10403S</strain>
    </source>
</reference>
<gene>
    <name evidence="1" type="primary">prmA</name>
    <name type="ordered locus">LMRG_00924</name>
</gene>
<feature type="chain" id="PRO_0000419032" description="Ribosomal protein L11 methyltransferase">
    <location>
        <begin position="1"/>
        <end position="314"/>
    </location>
</feature>
<feature type="binding site" evidence="1">
    <location>
        <position position="161"/>
    </location>
    <ligand>
        <name>S-adenosyl-L-methionine</name>
        <dbReference type="ChEBI" id="CHEBI:59789"/>
    </ligand>
</feature>
<feature type="binding site" evidence="1">
    <location>
        <position position="182"/>
    </location>
    <ligand>
        <name>S-adenosyl-L-methionine</name>
        <dbReference type="ChEBI" id="CHEBI:59789"/>
    </ligand>
</feature>
<feature type="binding site" evidence="1">
    <location>
        <position position="204"/>
    </location>
    <ligand>
        <name>S-adenosyl-L-methionine</name>
        <dbReference type="ChEBI" id="CHEBI:59789"/>
    </ligand>
</feature>
<feature type="binding site" evidence="1">
    <location>
        <position position="248"/>
    </location>
    <ligand>
        <name>S-adenosyl-L-methionine</name>
        <dbReference type="ChEBI" id="CHEBI:59789"/>
    </ligand>
</feature>
<protein>
    <recommendedName>
        <fullName evidence="1">Ribosomal protein L11 methyltransferase</fullName>
        <shortName evidence="1">L11 Mtase</shortName>
        <ecNumber evidence="1">2.1.1.-</ecNumber>
    </recommendedName>
</protein>
<sequence length="314" mass="34811">MEWSEVEVHTTNEAVEPVANVLTEFGAAGVSIEDVADFLREREDKFGEIYALRREDYPEDGVIIKAYFLKTTEFVEQIPEIEQTLKNLSTFDIPLGKFQFVVNDVDDEEWATAWKKYYHPVQITDRITIVPSWESYTPSANEIIIELDPGMAFGTGTHPTTQLCIRALSNYLQPGDEVIDVGTGSGVLSIASAKLGAKSILATDLDEIATRAAEENITLNKTEHIITVKQNNLLQDINKTNVDIVVANILAEVILLFPEDVYKALKPGGVFIASGIIEDKAKVVEEALKNAGLIIEKMEQQGDWVAIISKRGVE</sequence>
<dbReference type="EC" id="2.1.1.-" evidence="1"/>
<dbReference type="EMBL" id="AB023064">
    <property type="protein sequence ID" value="BAA82791.1"/>
    <property type="molecule type" value="Genomic_DNA"/>
</dbReference>
<dbReference type="EMBL" id="CP002002">
    <property type="protein sequence ID" value="AEO06456.1"/>
    <property type="molecule type" value="Genomic_DNA"/>
</dbReference>
<dbReference type="PIR" id="T43740">
    <property type="entry name" value="T43740"/>
</dbReference>
<dbReference type="RefSeq" id="WP_010990133.1">
    <property type="nucleotide sequence ID" value="NC_017544.1"/>
</dbReference>
<dbReference type="SMR" id="G2K044"/>
<dbReference type="KEGG" id="lmt:LMRG_00924"/>
<dbReference type="HOGENOM" id="CLU_049382_0_1_9"/>
<dbReference type="Proteomes" id="UP000001288">
    <property type="component" value="Chromosome"/>
</dbReference>
<dbReference type="GO" id="GO:0005737">
    <property type="term" value="C:cytoplasm"/>
    <property type="evidence" value="ECO:0007669"/>
    <property type="project" value="UniProtKB-SubCell"/>
</dbReference>
<dbReference type="GO" id="GO:0016279">
    <property type="term" value="F:protein-lysine N-methyltransferase activity"/>
    <property type="evidence" value="ECO:0007669"/>
    <property type="project" value="RHEA"/>
</dbReference>
<dbReference type="GO" id="GO:0032259">
    <property type="term" value="P:methylation"/>
    <property type="evidence" value="ECO:0007669"/>
    <property type="project" value="UniProtKB-KW"/>
</dbReference>
<dbReference type="CDD" id="cd02440">
    <property type="entry name" value="AdoMet_MTases"/>
    <property type="match status" value="1"/>
</dbReference>
<dbReference type="Gene3D" id="3.40.50.150">
    <property type="entry name" value="Vaccinia Virus protein VP39"/>
    <property type="match status" value="1"/>
</dbReference>
<dbReference type="HAMAP" id="MF_00735">
    <property type="entry name" value="Methyltr_PrmA"/>
    <property type="match status" value="1"/>
</dbReference>
<dbReference type="InterPro" id="IPR050078">
    <property type="entry name" value="Ribosomal_L11_MeTrfase_PrmA"/>
</dbReference>
<dbReference type="InterPro" id="IPR004498">
    <property type="entry name" value="Ribosomal_PrmA_MeTrfase"/>
</dbReference>
<dbReference type="InterPro" id="IPR029063">
    <property type="entry name" value="SAM-dependent_MTases_sf"/>
</dbReference>
<dbReference type="NCBIfam" id="TIGR00406">
    <property type="entry name" value="prmA"/>
    <property type="match status" value="1"/>
</dbReference>
<dbReference type="PANTHER" id="PTHR43648">
    <property type="entry name" value="ELECTRON TRANSFER FLAVOPROTEIN BETA SUBUNIT LYSINE METHYLTRANSFERASE"/>
    <property type="match status" value="1"/>
</dbReference>
<dbReference type="PANTHER" id="PTHR43648:SF1">
    <property type="entry name" value="ELECTRON TRANSFER FLAVOPROTEIN BETA SUBUNIT LYSINE METHYLTRANSFERASE"/>
    <property type="match status" value="1"/>
</dbReference>
<dbReference type="Pfam" id="PF06325">
    <property type="entry name" value="PrmA"/>
    <property type="match status" value="1"/>
</dbReference>
<dbReference type="PIRSF" id="PIRSF000401">
    <property type="entry name" value="RPL11_MTase"/>
    <property type="match status" value="1"/>
</dbReference>
<dbReference type="SUPFAM" id="SSF53335">
    <property type="entry name" value="S-adenosyl-L-methionine-dependent methyltransferases"/>
    <property type="match status" value="1"/>
</dbReference>
<name>PRMA_LISM4</name>
<organism>
    <name type="scientific">Listeria monocytogenes serotype 1/2a (strain 10403S)</name>
    <dbReference type="NCBI Taxonomy" id="393133"/>
    <lineage>
        <taxon>Bacteria</taxon>
        <taxon>Bacillati</taxon>
        <taxon>Bacillota</taxon>
        <taxon>Bacilli</taxon>
        <taxon>Bacillales</taxon>
        <taxon>Listeriaceae</taxon>
        <taxon>Listeria</taxon>
    </lineage>
</organism>
<proteinExistence type="inferred from homology"/>
<evidence type="ECO:0000255" key="1">
    <source>
        <dbReference type="HAMAP-Rule" id="MF_00735"/>
    </source>
</evidence>